<sequence>NSAHPCCDPVKCEPREGEHCISGPCCRNCKFLNAGTICKKAMLDGLNDYCTGISSDCPRNRYKGKEDD</sequence>
<feature type="chain" id="PRO_0000319013" description="Disintegrin EMS11A">
    <location>
        <begin position="1"/>
        <end position="68"/>
    </location>
</feature>
<feature type="domain" description="Disintegrin" evidence="1">
    <location>
        <begin position="1"/>
        <end position="65"/>
    </location>
</feature>
<feature type="short sequence motif" description="Cell attachment site; atypical (MLD)">
    <location>
        <begin position="42"/>
        <end position="44"/>
    </location>
</feature>
<feature type="disulfide bond" evidence="1">
    <location>
        <begin position="6"/>
        <end position="29"/>
    </location>
</feature>
<feature type="disulfide bond" description="Interchain" evidence="1">
    <location>
        <position position="7"/>
    </location>
</feature>
<feature type="disulfide bond" description="Interchain" evidence="1">
    <location>
        <position position="12"/>
    </location>
</feature>
<feature type="disulfide bond" evidence="1">
    <location>
        <begin position="20"/>
        <end position="26"/>
    </location>
</feature>
<feature type="disulfide bond" evidence="1">
    <location>
        <begin position="25"/>
        <end position="50"/>
    </location>
</feature>
<feature type="disulfide bond" evidence="1">
    <location>
        <begin position="38"/>
        <end position="57"/>
    </location>
</feature>
<name>DIDBA_ECHML</name>
<protein>
    <recommendedName>
        <fullName>Disintegrin EMS11A</fullName>
    </recommendedName>
</protein>
<evidence type="ECO:0000255" key="1">
    <source>
        <dbReference type="PROSITE-ProRule" id="PRU00068"/>
    </source>
</evidence>
<evidence type="ECO:0000269" key="2">
    <source>
    </source>
</evidence>
<evidence type="ECO:0000305" key="3"/>
<evidence type="ECO:0000305" key="4">
    <source>
    </source>
</evidence>
<keyword id="KW-1217">Cell adhesion impairing toxin</keyword>
<keyword id="KW-0903">Direct protein sequencing</keyword>
<keyword id="KW-1015">Disulfide bond</keyword>
<keyword id="KW-1199">Hemostasis impairing toxin</keyword>
<keyword id="KW-1201">Platelet aggregation inhibiting toxin</keyword>
<keyword id="KW-0964">Secreted</keyword>
<keyword id="KW-0800">Toxin</keyword>
<comment type="function">
    <text evidence="2">Poor inhibitor of platelet aggregation. The disintegrin inhibits the adhesion of both the alpha-4/beta-1 (ITGA4/ITGB1) and the alpha-5/beta-1 (ITGA5/ITGB1) integrins to VCAM-1 and fibronectin respectively with almost the same degree of specificity. Inhibition on alpha-IIb/beta-3 (ITGA2B/ITGB3) is low.</text>
</comment>
<comment type="subunit">
    <text evidence="2">Heterodimer; disulfide-linked.</text>
</comment>
<comment type="subcellular location">
    <subcellularLocation>
        <location evidence="2">Secreted</location>
    </subcellularLocation>
</comment>
<comment type="tissue specificity">
    <text>Expressed by the venom gland.</text>
</comment>
<comment type="miscellaneous">
    <text evidence="4">Negative results: does not inhibit alpha-1/beta-1 (ITGA1/ITGB1), alpha-2/beta-1 (ITGA2/ITGB1) and alpha-6/beta-1 (ITGA6/ITGB1).</text>
</comment>
<comment type="similarity">
    <text evidence="3">Belongs to the disintegrin family. Dimeric disintegrin subfamily.</text>
</comment>
<dbReference type="SMR" id="P0C6A3"/>
<dbReference type="GO" id="GO:0005576">
    <property type="term" value="C:extracellular region"/>
    <property type="evidence" value="ECO:0007669"/>
    <property type="project" value="UniProtKB-SubCell"/>
</dbReference>
<dbReference type="GO" id="GO:0090729">
    <property type="term" value="F:toxin activity"/>
    <property type="evidence" value="ECO:0007669"/>
    <property type="project" value="UniProtKB-KW"/>
</dbReference>
<dbReference type="Gene3D" id="4.10.70.10">
    <property type="entry name" value="Disintegrin domain"/>
    <property type="match status" value="1"/>
</dbReference>
<dbReference type="InterPro" id="IPR018358">
    <property type="entry name" value="Disintegrin_CS"/>
</dbReference>
<dbReference type="InterPro" id="IPR001762">
    <property type="entry name" value="Disintegrin_dom"/>
</dbReference>
<dbReference type="InterPro" id="IPR036436">
    <property type="entry name" value="Disintegrin_dom_sf"/>
</dbReference>
<dbReference type="PANTHER" id="PTHR11905">
    <property type="entry name" value="ADAM A DISINTEGRIN AND METALLOPROTEASE DOMAIN"/>
    <property type="match status" value="1"/>
</dbReference>
<dbReference type="PANTHER" id="PTHR11905:SF159">
    <property type="entry name" value="ADAM METALLOPROTEASE"/>
    <property type="match status" value="1"/>
</dbReference>
<dbReference type="Pfam" id="PF00200">
    <property type="entry name" value="Disintegrin"/>
    <property type="match status" value="1"/>
</dbReference>
<dbReference type="PRINTS" id="PR00289">
    <property type="entry name" value="DISINTEGRIN"/>
</dbReference>
<dbReference type="SMART" id="SM00050">
    <property type="entry name" value="DISIN"/>
    <property type="match status" value="1"/>
</dbReference>
<dbReference type="SUPFAM" id="SSF57552">
    <property type="entry name" value="Blood coagulation inhibitor (disintegrin)"/>
    <property type="match status" value="1"/>
</dbReference>
<dbReference type="PROSITE" id="PS00427">
    <property type="entry name" value="DISINTEGRIN_1"/>
    <property type="match status" value="1"/>
</dbReference>
<dbReference type="PROSITE" id="PS50214">
    <property type="entry name" value="DISINTEGRIN_2"/>
    <property type="match status" value="1"/>
</dbReference>
<accession>P0C6A3</accession>
<proteinExistence type="evidence at protein level"/>
<organism>
    <name type="scientific">Echis multisquamatus</name>
    <name type="common">Central Asian sand viper</name>
    <dbReference type="NCBI Taxonomy" id="93050"/>
    <lineage>
        <taxon>Eukaryota</taxon>
        <taxon>Metazoa</taxon>
        <taxon>Chordata</taxon>
        <taxon>Craniata</taxon>
        <taxon>Vertebrata</taxon>
        <taxon>Euteleostomi</taxon>
        <taxon>Lepidosauria</taxon>
        <taxon>Squamata</taxon>
        <taxon>Bifurcata</taxon>
        <taxon>Unidentata</taxon>
        <taxon>Episquamata</taxon>
        <taxon>Toxicofera</taxon>
        <taxon>Serpentes</taxon>
        <taxon>Colubroidea</taxon>
        <taxon>Viperidae</taxon>
        <taxon>Viperinae</taxon>
        <taxon>Echis</taxon>
    </lineage>
</organism>
<reference key="1">
    <citation type="journal article" date="2003" name="Biochem. J.">
        <title>Snake venom disintegrins: novel dimeric disintegrins and structural diversification by disulphide bond engineering.</title>
        <authorList>
            <person name="Calvete J.J."/>
            <person name="Moreno-Murciano M.P."/>
            <person name="Theakston R.D.G."/>
            <person name="Kisiel D.G."/>
            <person name="Marcinkiewicz C."/>
        </authorList>
    </citation>
    <scope>PROTEIN SEQUENCE</scope>
    <scope>FUNCTION</scope>
    <scope>SUBUNIT</scope>
    <scope>SUBCELLULAR LOCATION</scope>
    <source>
        <tissue>Venom</tissue>
    </source>
</reference>